<reference key="1">
    <citation type="journal article" date="1978" name="Nature">
        <title>Rearrangement of genetic information may produce immunoglobulin diversity.</title>
        <authorList>
            <person name="Weigert M."/>
            <person name="Gatmaitan L."/>
            <person name="Loh E."/>
            <person name="Schilling J."/>
            <person name="Hood L.E."/>
        </authorList>
    </citation>
    <scope>PROTEIN SEQUENCE</scope>
</reference>
<keyword id="KW-1064">Adaptive immunity</keyword>
<keyword id="KW-0903">Direct protein sequencing</keyword>
<keyword id="KW-1015">Disulfide bond</keyword>
<keyword id="KW-0391">Immunity</keyword>
<keyword id="KW-1280">Immunoglobulin</keyword>
<keyword id="KW-1185">Reference proteome</keyword>
<feature type="chain" id="PRO_0000059778" description="Ig kappa chain V-III region PC 7132">
    <location>
        <begin position="1"/>
        <end position="112" status="greater than"/>
    </location>
</feature>
<feature type="region of interest" description="Framework-1">
    <location>
        <begin position="1"/>
        <end position="23"/>
    </location>
</feature>
<feature type="region of interest" description="Complementarity-determining-1">
    <location>
        <begin position="24"/>
        <end position="38"/>
    </location>
</feature>
<feature type="region of interest" description="Framework-2">
    <location>
        <begin position="39"/>
        <end position="53"/>
    </location>
</feature>
<feature type="region of interest" description="Complementarity-determining-2">
    <location>
        <begin position="54"/>
        <end position="60"/>
    </location>
</feature>
<feature type="region of interest" description="Framework-3">
    <location>
        <begin position="61"/>
        <end position="92"/>
    </location>
</feature>
<feature type="region of interest" description="Complementarity-determining-3">
    <location>
        <begin position="93"/>
        <end position="102"/>
    </location>
</feature>
<feature type="region of interest" description="Framework-4">
    <location>
        <begin position="103"/>
        <end position="112"/>
    </location>
</feature>
<feature type="disulfide bond" evidence="1">
    <location>
        <begin position="23"/>
        <end position="92"/>
    </location>
</feature>
<feature type="non-terminal residue">
    <location>
        <position position="112"/>
    </location>
</feature>
<name>KV3A2_MOUSE</name>
<evidence type="ECO:0000255" key="1">
    <source>
        <dbReference type="PROSITE-ProRule" id="PRU00114"/>
    </source>
</evidence>
<sequence>DIVLTQSPASLAVSLGQRATISCRASESVDNYGISFMNWFQQKPGQPPKLLIYAASNQGSGVPARFSGSGSGTDFSLNIHPMEEDDTAMYFCQQSKEVPPYTFGGGTKLEIK</sequence>
<proteinExistence type="evidence at protein level"/>
<accession>P01655</accession>
<organism>
    <name type="scientific">Mus musculus</name>
    <name type="common">Mouse</name>
    <dbReference type="NCBI Taxonomy" id="10090"/>
    <lineage>
        <taxon>Eukaryota</taxon>
        <taxon>Metazoa</taxon>
        <taxon>Chordata</taxon>
        <taxon>Craniata</taxon>
        <taxon>Vertebrata</taxon>
        <taxon>Euteleostomi</taxon>
        <taxon>Mammalia</taxon>
        <taxon>Eutheria</taxon>
        <taxon>Euarchontoglires</taxon>
        <taxon>Glires</taxon>
        <taxon>Rodentia</taxon>
        <taxon>Myomorpha</taxon>
        <taxon>Muroidea</taxon>
        <taxon>Muridae</taxon>
        <taxon>Murinae</taxon>
        <taxon>Mus</taxon>
        <taxon>Mus</taxon>
    </lineage>
</organism>
<dbReference type="SMR" id="P01655"/>
<dbReference type="FunCoup" id="P01655">
    <property type="interactions" value="628"/>
</dbReference>
<dbReference type="jPOST" id="P01655"/>
<dbReference type="InParanoid" id="P01655"/>
<dbReference type="Proteomes" id="UP000000589">
    <property type="component" value="Unplaced"/>
</dbReference>
<dbReference type="RNAct" id="P01655">
    <property type="molecule type" value="protein"/>
</dbReference>
<dbReference type="GO" id="GO:0019814">
    <property type="term" value="C:immunoglobulin complex"/>
    <property type="evidence" value="ECO:0000318"/>
    <property type="project" value="GO_Central"/>
</dbReference>
<dbReference type="GO" id="GO:0002250">
    <property type="term" value="P:adaptive immune response"/>
    <property type="evidence" value="ECO:0007669"/>
    <property type="project" value="UniProtKB-KW"/>
</dbReference>
<dbReference type="GO" id="GO:0006955">
    <property type="term" value="P:immune response"/>
    <property type="evidence" value="ECO:0000318"/>
    <property type="project" value="GO_Central"/>
</dbReference>
<dbReference type="CDD" id="cd04980">
    <property type="entry name" value="IgV_L_kappa"/>
    <property type="match status" value="1"/>
</dbReference>
<dbReference type="FunFam" id="2.60.40.10:FF:000350">
    <property type="entry name" value="Immunoglobulin kappa chain variable 18-36"/>
    <property type="match status" value="1"/>
</dbReference>
<dbReference type="Gene3D" id="2.60.40.10">
    <property type="entry name" value="Immunoglobulins"/>
    <property type="match status" value="1"/>
</dbReference>
<dbReference type="InterPro" id="IPR007110">
    <property type="entry name" value="Ig-like_dom"/>
</dbReference>
<dbReference type="InterPro" id="IPR036179">
    <property type="entry name" value="Ig-like_dom_sf"/>
</dbReference>
<dbReference type="InterPro" id="IPR013783">
    <property type="entry name" value="Ig-like_fold"/>
</dbReference>
<dbReference type="InterPro" id="IPR003599">
    <property type="entry name" value="Ig_sub"/>
</dbReference>
<dbReference type="InterPro" id="IPR013106">
    <property type="entry name" value="Ig_V-set"/>
</dbReference>
<dbReference type="InterPro" id="IPR050150">
    <property type="entry name" value="IgV_Light_Chain"/>
</dbReference>
<dbReference type="PANTHER" id="PTHR23267">
    <property type="entry name" value="IMMUNOGLOBULIN LIGHT CHAIN"/>
    <property type="match status" value="1"/>
</dbReference>
<dbReference type="Pfam" id="PF07686">
    <property type="entry name" value="V-set"/>
    <property type="match status" value="1"/>
</dbReference>
<dbReference type="SMART" id="SM00409">
    <property type="entry name" value="IG"/>
    <property type="match status" value="1"/>
</dbReference>
<dbReference type="SMART" id="SM00406">
    <property type="entry name" value="IGv"/>
    <property type="match status" value="1"/>
</dbReference>
<dbReference type="SUPFAM" id="SSF48726">
    <property type="entry name" value="Immunoglobulin"/>
    <property type="match status" value="1"/>
</dbReference>
<dbReference type="PROSITE" id="PS50835">
    <property type="entry name" value="IG_LIKE"/>
    <property type="match status" value="1"/>
</dbReference>
<protein>
    <recommendedName>
        <fullName>Ig kappa chain V-III region PC 7132</fullName>
    </recommendedName>
</protein>